<comment type="function">
    <text evidence="1">Catalyzes the methylthiolation of N6-(dimethylallyl)adenosine (i(6)A), leading to the formation of 2-methylthio-N6-(dimethylallyl)adenosine (ms(2)i(6)A) at position 37 in tRNAs that read codons beginning with uridine.</text>
</comment>
<comment type="catalytic activity">
    <reaction evidence="1">
        <text>N(6)-dimethylallyladenosine(37) in tRNA + (sulfur carrier)-SH + AH2 + 2 S-adenosyl-L-methionine = 2-methylsulfanyl-N(6)-dimethylallyladenosine(37) in tRNA + (sulfur carrier)-H + 5'-deoxyadenosine + L-methionine + A + S-adenosyl-L-homocysteine + 2 H(+)</text>
        <dbReference type="Rhea" id="RHEA:37067"/>
        <dbReference type="Rhea" id="RHEA-COMP:10375"/>
        <dbReference type="Rhea" id="RHEA-COMP:10376"/>
        <dbReference type="Rhea" id="RHEA-COMP:14737"/>
        <dbReference type="Rhea" id="RHEA-COMP:14739"/>
        <dbReference type="ChEBI" id="CHEBI:13193"/>
        <dbReference type="ChEBI" id="CHEBI:15378"/>
        <dbReference type="ChEBI" id="CHEBI:17319"/>
        <dbReference type="ChEBI" id="CHEBI:17499"/>
        <dbReference type="ChEBI" id="CHEBI:29917"/>
        <dbReference type="ChEBI" id="CHEBI:57844"/>
        <dbReference type="ChEBI" id="CHEBI:57856"/>
        <dbReference type="ChEBI" id="CHEBI:59789"/>
        <dbReference type="ChEBI" id="CHEBI:64428"/>
        <dbReference type="ChEBI" id="CHEBI:74415"/>
        <dbReference type="ChEBI" id="CHEBI:74417"/>
        <dbReference type="EC" id="2.8.4.3"/>
    </reaction>
</comment>
<comment type="cofactor">
    <cofactor evidence="1">
        <name>[4Fe-4S] cluster</name>
        <dbReference type="ChEBI" id="CHEBI:49883"/>
    </cofactor>
    <text evidence="1">Binds 2 [4Fe-4S] clusters. One cluster is coordinated with 3 cysteines and an exchangeable S-adenosyl-L-methionine.</text>
</comment>
<comment type="subunit">
    <text evidence="1">Monomer.</text>
</comment>
<comment type="subcellular location">
    <subcellularLocation>
        <location evidence="1">Cytoplasm</location>
    </subcellularLocation>
</comment>
<comment type="similarity">
    <text evidence="1">Belongs to the methylthiotransferase family. MiaB subfamily.</text>
</comment>
<comment type="sequence caution" evidence="3">
    <conflict type="erroneous initiation">
        <sequence resource="EMBL-CDS" id="ABE59684"/>
    </conflict>
</comment>
<feature type="chain" id="PRO_0000374215" description="tRNA-2-methylthio-N(6)-dimethylallyladenosine synthase">
    <location>
        <begin position="1"/>
        <end position="448"/>
    </location>
</feature>
<feature type="domain" description="MTTase N-terminal" evidence="1">
    <location>
        <begin position="3"/>
        <end position="120"/>
    </location>
</feature>
<feature type="domain" description="Radical SAM core" evidence="2">
    <location>
        <begin position="144"/>
        <end position="376"/>
    </location>
</feature>
<feature type="domain" description="TRAM" evidence="1">
    <location>
        <begin position="379"/>
        <end position="444"/>
    </location>
</feature>
<feature type="binding site" evidence="1">
    <location>
        <position position="12"/>
    </location>
    <ligand>
        <name>[4Fe-4S] cluster</name>
        <dbReference type="ChEBI" id="CHEBI:49883"/>
        <label>1</label>
    </ligand>
</feature>
<feature type="binding site" evidence="1">
    <location>
        <position position="49"/>
    </location>
    <ligand>
        <name>[4Fe-4S] cluster</name>
        <dbReference type="ChEBI" id="CHEBI:49883"/>
        <label>1</label>
    </ligand>
</feature>
<feature type="binding site" evidence="1">
    <location>
        <position position="83"/>
    </location>
    <ligand>
        <name>[4Fe-4S] cluster</name>
        <dbReference type="ChEBI" id="CHEBI:49883"/>
        <label>1</label>
    </ligand>
</feature>
<feature type="binding site" evidence="1">
    <location>
        <position position="158"/>
    </location>
    <ligand>
        <name>[4Fe-4S] cluster</name>
        <dbReference type="ChEBI" id="CHEBI:49883"/>
        <label>2</label>
        <note>4Fe-4S-S-AdoMet</note>
    </ligand>
</feature>
<feature type="binding site" evidence="1">
    <location>
        <position position="162"/>
    </location>
    <ligand>
        <name>[4Fe-4S] cluster</name>
        <dbReference type="ChEBI" id="CHEBI:49883"/>
        <label>2</label>
        <note>4Fe-4S-S-AdoMet</note>
    </ligand>
</feature>
<feature type="binding site" evidence="1">
    <location>
        <position position="165"/>
    </location>
    <ligand>
        <name>[4Fe-4S] cluster</name>
        <dbReference type="ChEBI" id="CHEBI:49883"/>
        <label>2</label>
        <note>4Fe-4S-S-AdoMet</note>
    </ligand>
</feature>
<name>MIAB_CHRSD</name>
<accession>Q1QV24</accession>
<organism>
    <name type="scientific">Chromohalobacter salexigens (strain ATCC BAA-138 / DSM 3043 / CIP 106854 / NCIMB 13768 / 1H11)</name>
    <dbReference type="NCBI Taxonomy" id="290398"/>
    <lineage>
        <taxon>Bacteria</taxon>
        <taxon>Pseudomonadati</taxon>
        <taxon>Pseudomonadota</taxon>
        <taxon>Gammaproteobacteria</taxon>
        <taxon>Oceanospirillales</taxon>
        <taxon>Halomonadaceae</taxon>
        <taxon>Chromohalobacter</taxon>
    </lineage>
</organism>
<sequence length="448" mass="49983">MAKKLFIKTHGCQMNEYDSARMADLLGESHALELTDDERDADVILLNTCSIREKAQEKVFHQLGRWKKLKAANPDLVIGVGGCVASQEGEHIKKRAPHVDMVFGPQTLHRLPTMLDSRQGAETISMVDVTFPEIEKFDHLPKPTSDGATAFVSVMEGCSKYCTFCVVPYTRGEEVSRPFESVMEEVIHLADQGVREINLLGQNVNAYRGENQLGDEIDLAELIGCVAAVEGIDRIRFTTSHPVEFSDSLIEAYGEIPELVSHLHLPVQAGSDRILAAMKRGHTVEEYVDKLERIRALRPDISFSSDFIIGFPGETEEDFMDTMNLIQRIGFDASFSFVYSPRPGTPAANLEDETPEATKKQRLAILQERLNQQTMQISRRMVGNTERILVTGFSPKDPGQLSGRTENNRVVNFRAPNPTELIGYFVDVEITEALPNSLRGDLASPARY</sequence>
<gene>
    <name evidence="1" type="primary">miaB</name>
    <name type="ordered locus">Csal_2334</name>
</gene>
<reference key="1">
    <citation type="journal article" date="2011" name="Stand. Genomic Sci.">
        <title>Complete genome sequence of the halophilic and highly halotolerant Chromohalobacter salexigens type strain (1H11(T)).</title>
        <authorList>
            <person name="Copeland A."/>
            <person name="O'Connor K."/>
            <person name="Lucas S."/>
            <person name="Lapidus A."/>
            <person name="Berry K.W."/>
            <person name="Detter J.C."/>
            <person name="Del Rio T.G."/>
            <person name="Hammon N."/>
            <person name="Dalin E."/>
            <person name="Tice H."/>
            <person name="Pitluck S."/>
            <person name="Bruce D."/>
            <person name="Goodwin L."/>
            <person name="Han C."/>
            <person name="Tapia R."/>
            <person name="Saunders E."/>
            <person name="Schmutz J."/>
            <person name="Brettin T."/>
            <person name="Larimer F."/>
            <person name="Land M."/>
            <person name="Hauser L."/>
            <person name="Vargas C."/>
            <person name="Nieto J.J."/>
            <person name="Kyrpides N.C."/>
            <person name="Ivanova N."/>
            <person name="Goker M."/>
            <person name="Klenk H.P."/>
            <person name="Csonka L.N."/>
            <person name="Woyke T."/>
        </authorList>
    </citation>
    <scope>NUCLEOTIDE SEQUENCE [LARGE SCALE GENOMIC DNA]</scope>
    <source>
        <strain>ATCC BAA-138 / DSM 3043 / CIP 106854 / NCIMB 13768 / 1H11</strain>
    </source>
</reference>
<dbReference type="EC" id="2.8.4.3" evidence="1"/>
<dbReference type="EMBL" id="CP000285">
    <property type="protein sequence ID" value="ABE59684.1"/>
    <property type="status" value="ALT_INIT"/>
    <property type="molecule type" value="Genomic_DNA"/>
</dbReference>
<dbReference type="RefSeq" id="WP_035411885.1">
    <property type="nucleotide sequence ID" value="NC_007963.1"/>
</dbReference>
<dbReference type="SMR" id="Q1QV24"/>
<dbReference type="STRING" id="290398.Csal_2334"/>
<dbReference type="GeneID" id="95335045"/>
<dbReference type="KEGG" id="csa:Csal_2334"/>
<dbReference type="eggNOG" id="COG0621">
    <property type="taxonomic scope" value="Bacteria"/>
</dbReference>
<dbReference type="HOGENOM" id="CLU_018697_2_0_6"/>
<dbReference type="OrthoDB" id="9805215at2"/>
<dbReference type="Proteomes" id="UP000000239">
    <property type="component" value="Chromosome"/>
</dbReference>
<dbReference type="GO" id="GO:0005829">
    <property type="term" value="C:cytosol"/>
    <property type="evidence" value="ECO:0007669"/>
    <property type="project" value="TreeGrafter"/>
</dbReference>
<dbReference type="GO" id="GO:0051539">
    <property type="term" value="F:4 iron, 4 sulfur cluster binding"/>
    <property type="evidence" value="ECO:0007669"/>
    <property type="project" value="UniProtKB-UniRule"/>
</dbReference>
<dbReference type="GO" id="GO:0046872">
    <property type="term" value="F:metal ion binding"/>
    <property type="evidence" value="ECO:0007669"/>
    <property type="project" value="UniProtKB-KW"/>
</dbReference>
<dbReference type="GO" id="GO:0035597">
    <property type="term" value="F:N6-isopentenyladenosine methylthiotransferase activity"/>
    <property type="evidence" value="ECO:0007669"/>
    <property type="project" value="TreeGrafter"/>
</dbReference>
<dbReference type="CDD" id="cd01335">
    <property type="entry name" value="Radical_SAM"/>
    <property type="match status" value="1"/>
</dbReference>
<dbReference type="FunFam" id="3.40.50.12160:FF:000001">
    <property type="entry name" value="tRNA-2-methylthio-N(6)-dimethylallyladenosine synthase"/>
    <property type="match status" value="1"/>
</dbReference>
<dbReference type="FunFam" id="3.80.30.20:FF:000001">
    <property type="entry name" value="tRNA-2-methylthio-N(6)-dimethylallyladenosine synthase 2"/>
    <property type="match status" value="1"/>
</dbReference>
<dbReference type="Gene3D" id="3.40.50.12160">
    <property type="entry name" value="Methylthiotransferase, N-terminal domain"/>
    <property type="match status" value="1"/>
</dbReference>
<dbReference type="Gene3D" id="3.80.30.20">
    <property type="entry name" value="tm_1862 like domain"/>
    <property type="match status" value="1"/>
</dbReference>
<dbReference type="HAMAP" id="MF_01864">
    <property type="entry name" value="tRNA_metthiotr_MiaB"/>
    <property type="match status" value="1"/>
</dbReference>
<dbReference type="InterPro" id="IPR006638">
    <property type="entry name" value="Elp3/MiaA/NifB-like_rSAM"/>
</dbReference>
<dbReference type="InterPro" id="IPR005839">
    <property type="entry name" value="Methylthiotransferase"/>
</dbReference>
<dbReference type="InterPro" id="IPR020612">
    <property type="entry name" value="Methylthiotransferase_CS"/>
</dbReference>
<dbReference type="InterPro" id="IPR013848">
    <property type="entry name" value="Methylthiotransferase_N"/>
</dbReference>
<dbReference type="InterPro" id="IPR038135">
    <property type="entry name" value="Methylthiotransferase_N_sf"/>
</dbReference>
<dbReference type="InterPro" id="IPR006463">
    <property type="entry name" value="MiaB_methiolase"/>
</dbReference>
<dbReference type="InterPro" id="IPR007197">
    <property type="entry name" value="rSAM"/>
</dbReference>
<dbReference type="InterPro" id="IPR023404">
    <property type="entry name" value="rSAM_horseshoe"/>
</dbReference>
<dbReference type="InterPro" id="IPR002792">
    <property type="entry name" value="TRAM_dom"/>
</dbReference>
<dbReference type="NCBIfam" id="TIGR01574">
    <property type="entry name" value="miaB-methiolase"/>
    <property type="match status" value="1"/>
</dbReference>
<dbReference type="NCBIfam" id="TIGR00089">
    <property type="entry name" value="MiaB/RimO family radical SAM methylthiotransferase"/>
    <property type="match status" value="1"/>
</dbReference>
<dbReference type="PANTHER" id="PTHR43020">
    <property type="entry name" value="CDK5 REGULATORY SUBUNIT-ASSOCIATED PROTEIN 1"/>
    <property type="match status" value="1"/>
</dbReference>
<dbReference type="PANTHER" id="PTHR43020:SF2">
    <property type="entry name" value="MITOCHONDRIAL TRNA METHYLTHIOTRANSFERASE CDK5RAP1"/>
    <property type="match status" value="1"/>
</dbReference>
<dbReference type="Pfam" id="PF04055">
    <property type="entry name" value="Radical_SAM"/>
    <property type="match status" value="1"/>
</dbReference>
<dbReference type="Pfam" id="PF01938">
    <property type="entry name" value="TRAM"/>
    <property type="match status" value="1"/>
</dbReference>
<dbReference type="Pfam" id="PF00919">
    <property type="entry name" value="UPF0004"/>
    <property type="match status" value="1"/>
</dbReference>
<dbReference type="SFLD" id="SFLDF00273">
    <property type="entry name" value="(dimethylallyl)adenosine_tRNA"/>
    <property type="match status" value="1"/>
</dbReference>
<dbReference type="SFLD" id="SFLDG01082">
    <property type="entry name" value="B12-binding_domain_containing"/>
    <property type="match status" value="1"/>
</dbReference>
<dbReference type="SFLD" id="SFLDG01061">
    <property type="entry name" value="methylthiotransferase"/>
    <property type="match status" value="1"/>
</dbReference>
<dbReference type="SMART" id="SM00729">
    <property type="entry name" value="Elp3"/>
    <property type="match status" value="1"/>
</dbReference>
<dbReference type="SUPFAM" id="SSF102114">
    <property type="entry name" value="Radical SAM enzymes"/>
    <property type="match status" value="1"/>
</dbReference>
<dbReference type="PROSITE" id="PS51449">
    <property type="entry name" value="MTTASE_N"/>
    <property type="match status" value="1"/>
</dbReference>
<dbReference type="PROSITE" id="PS01278">
    <property type="entry name" value="MTTASE_RADICAL"/>
    <property type="match status" value="1"/>
</dbReference>
<dbReference type="PROSITE" id="PS51918">
    <property type="entry name" value="RADICAL_SAM"/>
    <property type="match status" value="1"/>
</dbReference>
<dbReference type="PROSITE" id="PS50926">
    <property type="entry name" value="TRAM"/>
    <property type="match status" value="1"/>
</dbReference>
<proteinExistence type="inferred from homology"/>
<evidence type="ECO:0000255" key="1">
    <source>
        <dbReference type="HAMAP-Rule" id="MF_01864"/>
    </source>
</evidence>
<evidence type="ECO:0000255" key="2">
    <source>
        <dbReference type="PROSITE-ProRule" id="PRU01266"/>
    </source>
</evidence>
<evidence type="ECO:0000305" key="3"/>
<protein>
    <recommendedName>
        <fullName evidence="1">tRNA-2-methylthio-N(6)-dimethylallyladenosine synthase</fullName>
        <ecNumber evidence="1">2.8.4.3</ecNumber>
    </recommendedName>
    <alternativeName>
        <fullName evidence="1">(Dimethylallyl)adenosine tRNA methylthiotransferase MiaB</fullName>
    </alternativeName>
    <alternativeName>
        <fullName evidence="1">tRNA-i(6)A37 methylthiotransferase</fullName>
    </alternativeName>
</protein>
<keyword id="KW-0004">4Fe-4S</keyword>
<keyword id="KW-0963">Cytoplasm</keyword>
<keyword id="KW-0408">Iron</keyword>
<keyword id="KW-0411">Iron-sulfur</keyword>
<keyword id="KW-0479">Metal-binding</keyword>
<keyword id="KW-1185">Reference proteome</keyword>
<keyword id="KW-0949">S-adenosyl-L-methionine</keyword>
<keyword id="KW-0808">Transferase</keyword>
<keyword id="KW-0819">tRNA processing</keyword>